<dbReference type="EC" id="2.1.1.195" evidence="1"/>
<dbReference type="EMBL" id="CP000100">
    <property type="protein sequence ID" value="ABB56222.1"/>
    <property type="molecule type" value="Genomic_DNA"/>
</dbReference>
<dbReference type="RefSeq" id="WP_011243633.1">
    <property type="nucleotide sequence ID" value="NZ_JACJTX010000002.1"/>
</dbReference>
<dbReference type="SMR" id="Q31RU7"/>
<dbReference type="STRING" id="1140.Synpcc7942_0190"/>
<dbReference type="PaxDb" id="1140-Synpcc7942_0190"/>
<dbReference type="GeneID" id="72429003"/>
<dbReference type="KEGG" id="syf:Synpcc7942_0190"/>
<dbReference type="eggNOG" id="COG1903">
    <property type="taxonomic scope" value="Bacteria"/>
</dbReference>
<dbReference type="HOGENOM" id="CLU_041273_1_2_3"/>
<dbReference type="OrthoDB" id="6439987at2"/>
<dbReference type="BioCyc" id="SYNEL:SYNPCC7942_0190-MONOMER"/>
<dbReference type="UniPathway" id="UPA00148">
    <property type="reaction ID" value="UER00227"/>
</dbReference>
<dbReference type="Proteomes" id="UP000889800">
    <property type="component" value="Chromosome"/>
</dbReference>
<dbReference type="GO" id="GO:0043780">
    <property type="term" value="F:cobalt-precorrin-5B C1-methyltransferase activity"/>
    <property type="evidence" value="ECO:0007669"/>
    <property type="project" value="RHEA"/>
</dbReference>
<dbReference type="GO" id="GO:0019251">
    <property type="term" value="P:anaerobic cobalamin biosynthetic process"/>
    <property type="evidence" value="ECO:0007669"/>
    <property type="project" value="UniProtKB-UniRule"/>
</dbReference>
<dbReference type="GO" id="GO:0032259">
    <property type="term" value="P:methylation"/>
    <property type="evidence" value="ECO:0007669"/>
    <property type="project" value="UniProtKB-KW"/>
</dbReference>
<dbReference type="Gene3D" id="3.30.2110.10">
    <property type="entry name" value="CbiD-like"/>
    <property type="match status" value="1"/>
</dbReference>
<dbReference type="HAMAP" id="MF_00787">
    <property type="entry name" value="CbiD"/>
    <property type="match status" value="1"/>
</dbReference>
<dbReference type="InterPro" id="IPR002748">
    <property type="entry name" value="CbiD"/>
</dbReference>
<dbReference type="InterPro" id="IPR036074">
    <property type="entry name" value="CbiD_sf"/>
</dbReference>
<dbReference type="NCBIfam" id="TIGR00312">
    <property type="entry name" value="cbiD"/>
    <property type="match status" value="1"/>
</dbReference>
<dbReference type="PANTHER" id="PTHR35863">
    <property type="entry name" value="COBALT-PRECORRIN-5B C(1)-METHYLTRANSFERASE"/>
    <property type="match status" value="1"/>
</dbReference>
<dbReference type="PANTHER" id="PTHR35863:SF1">
    <property type="entry name" value="COBALT-PRECORRIN-5B C(1)-METHYLTRANSFERASE"/>
    <property type="match status" value="1"/>
</dbReference>
<dbReference type="Pfam" id="PF01888">
    <property type="entry name" value="CbiD"/>
    <property type="match status" value="1"/>
</dbReference>
<dbReference type="PIRSF" id="PIRSF026782">
    <property type="entry name" value="CbiD"/>
    <property type="match status" value="1"/>
</dbReference>
<dbReference type="SUPFAM" id="SSF111342">
    <property type="entry name" value="CbiD-like"/>
    <property type="match status" value="1"/>
</dbReference>
<proteinExistence type="inferred from homology"/>
<comment type="function">
    <text evidence="1">Catalyzes the methylation of C-1 in cobalt-precorrin-5B to form cobalt-precorrin-6A.</text>
</comment>
<comment type="catalytic activity">
    <reaction evidence="1">
        <text>Co-precorrin-5B + S-adenosyl-L-methionine = Co-precorrin-6A + S-adenosyl-L-homocysteine</text>
        <dbReference type="Rhea" id="RHEA:26285"/>
        <dbReference type="ChEBI" id="CHEBI:57856"/>
        <dbReference type="ChEBI" id="CHEBI:59789"/>
        <dbReference type="ChEBI" id="CHEBI:60063"/>
        <dbReference type="ChEBI" id="CHEBI:60064"/>
        <dbReference type="EC" id="2.1.1.195"/>
    </reaction>
</comment>
<comment type="pathway">
    <text evidence="1">Cofactor biosynthesis; adenosylcobalamin biosynthesis; cob(II)yrinate a,c-diamide from sirohydrochlorin (anaerobic route): step 6/10.</text>
</comment>
<comment type="similarity">
    <text evidence="1">Belongs to the CbiD family.</text>
</comment>
<name>CBID_SYNE7</name>
<organism>
    <name type="scientific">Synechococcus elongatus (strain ATCC 33912 / PCC 7942 / FACHB-805)</name>
    <name type="common">Anacystis nidulans R2</name>
    <dbReference type="NCBI Taxonomy" id="1140"/>
    <lineage>
        <taxon>Bacteria</taxon>
        <taxon>Bacillati</taxon>
        <taxon>Cyanobacteriota</taxon>
        <taxon>Cyanophyceae</taxon>
        <taxon>Synechococcales</taxon>
        <taxon>Synechococcaceae</taxon>
        <taxon>Synechococcus</taxon>
    </lineage>
</organism>
<evidence type="ECO:0000255" key="1">
    <source>
        <dbReference type="HAMAP-Rule" id="MF_00787"/>
    </source>
</evidence>
<feature type="chain" id="PRO_0000257783" description="Cobalt-precorrin-5B C(1)-methyltransferase">
    <location>
        <begin position="1"/>
        <end position="374"/>
    </location>
</feature>
<protein>
    <recommendedName>
        <fullName evidence="1">Cobalt-precorrin-5B C(1)-methyltransferase</fullName>
        <ecNumber evidence="1">2.1.1.195</ecNumber>
    </recommendedName>
    <alternativeName>
        <fullName evidence="1">Cobalt-precorrin-6A synthase</fullName>
    </alternativeName>
</protein>
<sequence>MARSGYTLPVFACAAAIAALQRLRQPAASIQSVDCHLIDPDQTVAIAIEQVAPLSPDRALAICRSDPGDNLDLTRGTPIWAEVQLSPRSPDQDSLAIEAGEGIGHSETGPAIYDYAQRLLRANLLPLLQTNEQLTVRLILPEGRRLAERTANAAFGVVEGLSLLGTHGVAEALSAPEQLQVFRDRLRQLSADPDLVIFCIGENGLDLSQKIGLPRDRQLKTANWLGPLLVEAGLLGIPRILLFGYHGKLLKLAGSIFHTHHHVADARREILAAYAIAAGASLEQVRSLLDFPTVDAATQYLDQTDPALASRLWPQIAEAIVDRSQAYIRRYSEQIPEIGVVLFGRDRQLLTASSQAQTWLTNRAIAQPLRYPSA</sequence>
<reference key="1">
    <citation type="submission" date="2005-08" db="EMBL/GenBank/DDBJ databases">
        <title>Complete sequence of chromosome 1 of Synechococcus elongatus PCC 7942.</title>
        <authorList>
            <consortium name="US DOE Joint Genome Institute"/>
            <person name="Copeland A."/>
            <person name="Lucas S."/>
            <person name="Lapidus A."/>
            <person name="Barry K."/>
            <person name="Detter J.C."/>
            <person name="Glavina T."/>
            <person name="Hammon N."/>
            <person name="Israni S."/>
            <person name="Pitluck S."/>
            <person name="Schmutz J."/>
            <person name="Larimer F."/>
            <person name="Land M."/>
            <person name="Kyrpides N."/>
            <person name="Lykidis A."/>
            <person name="Golden S."/>
            <person name="Richardson P."/>
        </authorList>
    </citation>
    <scope>NUCLEOTIDE SEQUENCE [LARGE SCALE GENOMIC DNA]</scope>
    <source>
        <strain>ATCC 33912 / PCC 7942 / FACHB-805</strain>
    </source>
</reference>
<gene>
    <name evidence="1" type="primary">cbiD</name>
    <name type="ordered locus">Synpcc7942_0190</name>
</gene>
<accession>Q31RU7</accession>
<keyword id="KW-0169">Cobalamin biosynthesis</keyword>
<keyword id="KW-0489">Methyltransferase</keyword>
<keyword id="KW-1185">Reference proteome</keyword>
<keyword id="KW-0949">S-adenosyl-L-methionine</keyword>
<keyword id="KW-0808">Transferase</keyword>